<keyword id="KW-0997">Cell inner membrane</keyword>
<keyword id="KW-1003">Cell membrane</keyword>
<keyword id="KW-0350">Heme biosynthesis</keyword>
<keyword id="KW-0472">Membrane</keyword>
<keyword id="KW-1185">Reference proteome</keyword>
<keyword id="KW-0808">Transferase</keyword>
<keyword id="KW-0812">Transmembrane</keyword>
<keyword id="KW-1133">Transmembrane helix</keyword>
<name>COXX_NITV2</name>
<feature type="chain" id="PRO_0000346041" description="Protoheme IX farnesyltransferase">
    <location>
        <begin position="1"/>
        <end position="287"/>
    </location>
</feature>
<feature type="transmembrane region" description="Helical" evidence="1">
    <location>
        <begin position="19"/>
        <end position="39"/>
    </location>
</feature>
<feature type="transmembrane region" description="Helical" evidence="1">
    <location>
        <begin position="100"/>
        <end position="120"/>
    </location>
</feature>
<feature type="transmembrane region" description="Helical" evidence="1">
    <location>
        <begin position="134"/>
        <end position="154"/>
    </location>
</feature>
<feature type="transmembrane region" description="Helical" evidence="1">
    <location>
        <begin position="162"/>
        <end position="182"/>
    </location>
</feature>
<feature type="transmembrane region" description="Helical" evidence="1">
    <location>
        <begin position="212"/>
        <end position="232"/>
    </location>
</feature>
<feature type="transmembrane region" description="Helical" evidence="1">
    <location>
        <begin position="233"/>
        <end position="253"/>
    </location>
</feature>
<feature type="transmembrane region" description="Helical" evidence="1">
    <location>
        <begin position="267"/>
        <end position="287"/>
    </location>
</feature>
<accession>Q72B27</accession>
<protein>
    <recommendedName>
        <fullName evidence="1">Protoheme IX farnesyltransferase</fullName>
        <ecNumber evidence="1">2.5.1.141</ecNumber>
    </recommendedName>
    <alternativeName>
        <fullName evidence="1">Heme B farnesyltransferase</fullName>
    </alternativeName>
    <alternativeName>
        <fullName evidence="1">Heme O synthase</fullName>
    </alternativeName>
</protein>
<evidence type="ECO:0000255" key="1">
    <source>
        <dbReference type="HAMAP-Rule" id="MF_00154"/>
    </source>
</evidence>
<gene>
    <name evidence="1" type="primary">ctaB</name>
    <name type="ordered locus">DVU_1811</name>
</gene>
<comment type="function">
    <text evidence="1">Converts heme B (protoheme IX) to heme O by substitution of the vinyl group on carbon 2 of heme B porphyrin ring with a hydroxyethyl farnesyl side group.</text>
</comment>
<comment type="catalytic activity">
    <reaction evidence="1">
        <text>heme b + (2E,6E)-farnesyl diphosphate + H2O = Fe(II)-heme o + diphosphate</text>
        <dbReference type="Rhea" id="RHEA:28070"/>
        <dbReference type="ChEBI" id="CHEBI:15377"/>
        <dbReference type="ChEBI" id="CHEBI:33019"/>
        <dbReference type="ChEBI" id="CHEBI:60344"/>
        <dbReference type="ChEBI" id="CHEBI:60530"/>
        <dbReference type="ChEBI" id="CHEBI:175763"/>
        <dbReference type="EC" id="2.5.1.141"/>
    </reaction>
</comment>
<comment type="pathway">
    <text evidence="1">Porphyrin-containing compound metabolism; heme O biosynthesis; heme O from protoheme: step 1/1.</text>
</comment>
<comment type="subcellular location">
    <subcellularLocation>
        <location evidence="1">Cell inner membrane</location>
        <topology evidence="1">Multi-pass membrane protein</topology>
    </subcellularLocation>
</comment>
<comment type="miscellaneous">
    <text evidence="1">Carbon 2 of the heme B porphyrin ring is defined according to the Fischer nomenclature.</text>
</comment>
<comment type="similarity">
    <text evidence="1">Belongs to the UbiA prenyltransferase family. Protoheme IX farnesyltransferase subfamily.</text>
</comment>
<organism>
    <name type="scientific">Nitratidesulfovibrio vulgaris (strain ATCC 29579 / DSM 644 / CCUG 34227 / NCIMB 8303 / VKM B-1760 / Hildenborough)</name>
    <name type="common">Desulfovibrio vulgaris</name>
    <dbReference type="NCBI Taxonomy" id="882"/>
    <lineage>
        <taxon>Bacteria</taxon>
        <taxon>Pseudomonadati</taxon>
        <taxon>Thermodesulfobacteriota</taxon>
        <taxon>Desulfovibrionia</taxon>
        <taxon>Desulfovibrionales</taxon>
        <taxon>Desulfovibrionaceae</taxon>
        <taxon>Nitratidesulfovibrio</taxon>
    </lineage>
</organism>
<sequence>MGRCTIADVAMLIRWRVSLMVAGATFFGAMLAVPHVTITHLLASLATFLLAGGCSAINQVQEADLDAVIPRTASRPIPCGRIGHMYGSLMGLALVTVGWMVLCLAGGLTSLLVGIGIVAVYNGLYTPLKRRTSFALLVGAAAGAMPPVVGWLAVGGHPASPMLVVVYTLYLLWQIPHFWLHAARDREAYRKARLPLPLLSLPHERYARLLKVWFHAYAVAVLMVPAFPLLEWVGMRIMVTLCGIALLFAAMLAVRKRRVALHIADAVLCAVMVVLLIDRLAIPVSLF</sequence>
<dbReference type="EC" id="2.5.1.141" evidence="1"/>
<dbReference type="EMBL" id="AE017285">
    <property type="protein sequence ID" value="AAS96288.1"/>
    <property type="molecule type" value="Genomic_DNA"/>
</dbReference>
<dbReference type="RefSeq" id="WP_010939098.1">
    <property type="nucleotide sequence ID" value="NC_002937.3"/>
</dbReference>
<dbReference type="RefSeq" id="YP_011029.1">
    <property type="nucleotide sequence ID" value="NC_002937.3"/>
</dbReference>
<dbReference type="SMR" id="Q72B27"/>
<dbReference type="STRING" id="882.DVU_1811"/>
<dbReference type="PaxDb" id="882-DVU_1811"/>
<dbReference type="EnsemblBacteria" id="AAS96288">
    <property type="protein sequence ID" value="AAS96288"/>
    <property type="gene ID" value="DVU_1811"/>
</dbReference>
<dbReference type="KEGG" id="dvu:DVU_1811"/>
<dbReference type="PATRIC" id="fig|882.5.peg.1661"/>
<dbReference type="eggNOG" id="COG0109">
    <property type="taxonomic scope" value="Bacteria"/>
</dbReference>
<dbReference type="HOGENOM" id="CLU_029631_3_1_7"/>
<dbReference type="OrthoDB" id="9814417at2"/>
<dbReference type="PhylomeDB" id="Q72B27"/>
<dbReference type="UniPathway" id="UPA00834">
    <property type="reaction ID" value="UER00712"/>
</dbReference>
<dbReference type="Proteomes" id="UP000002194">
    <property type="component" value="Chromosome"/>
</dbReference>
<dbReference type="GO" id="GO:0005886">
    <property type="term" value="C:plasma membrane"/>
    <property type="evidence" value="ECO:0007669"/>
    <property type="project" value="UniProtKB-SubCell"/>
</dbReference>
<dbReference type="GO" id="GO:0008495">
    <property type="term" value="F:protoheme IX farnesyltransferase activity"/>
    <property type="evidence" value="ECO:0007669"/>
    <property type="project" value="UniProtKB-UniRule"/>
</dbReference>
<dbReference type="GO" id="GO:0048034">
    <property type="term" value="P:heme O biosynthetic process"/>
    <property type="evidence" value="ECO:0007669"/>
    <property type="project" value="UniProtKB-UniRule"/>
</dbReference>
<dbReference type="Gene3D" id="1.10.357.140">
    <property type="entry name" value="UbiA prenyltransferase"/>
    <property type="match status" value="1"/>
</dbReference>
<dbReference type="HAMAP" id="MF_00154">
    <property type="entry name" value="CyoE_CtaB"/>
    <property type="match status" value="1"/>
</dbReference>
<dbReference type="InterPro" id="IPR006369">
    <property type="entry name" value="Protohaem_IX_farnesylTrfase"/>
</dbReference>
<dbReference type="InterPro" id="IPR000537">
    <property type="entry name" value="UbiA_prenyltransferase"/>
</dbReference>
<dbReference type="InterPro" id="IPR044878">
    <property type="entry name" value="UbiA_sf"/>
</dbReference>
<dbReference type="PANTHER" id="PTHR43448:SF7">
    <property type="entry name" value="4-HYDROXYBENZOATE SOLANESYLTRANSFERASE"/>
    <property type="match status" value="1"/>
</dbReference>
<dbReference type="PANTHER" id="PTHR43448">
    <property type="entry name" value="PROTOHEME IX FARNESYLTRANSFERASE, MITOCHONDRIAL"/>
    <property type="match status" value="1"/>
</dbReference>
<dbReference type="Pfam" id="PF01040">
    <property type="entry name" value="UbiA"/>
    <property type="match status" value="1"/>
</dbReference>
<reference key="1">
    <citation type="journal article" date="2004" name="Nat. Biotechnol.">
        <title>The genome sequence of the anaerobic, sulfate-reducing bacterium Desulfovibrio vulgaris Hildenborough.</title>
        <authorList>
            <person name="Heidelberg J.F."/>
            <person name="Seshadri R."/>
            <person name="Haveman S.A."/>
            <person name="Hemme C.L."/>
            <person name="Paulsen I.T."/>
            <person name="Kolonay J.F."/>
            <person name="Eisen J.A."/>
            <person name="Ward N.L."/>
            <person name="Methe B.A."/>
            <person name="Brinkac L.M."/>
            <person name="Daugherty S.C."/>
            <person name="DeBoy R.T."/>
            <person name="Dodson R.J."/>
            <person name="Durkin A.S."/>
            <person name="Madupu R."/>
            <person name="Nelson W.C."/>
            <person name="Sullivan S.A."/>
            <person name="Fouts D.E."/>
            <person name="Haft D.H."/>
            <person name="Selengut J."/>
            <person name="Peterson J.D."/>
            <person name="Davidsen T.M."/>
            <person name="Zafar N."/>
            <person name="Zhou L."/>
            <person name="Radune D."/>
            <person name="Dimitrov G."/>
            <person name="Hance M."/>
            <person name="Tran K."/>
            <person name="Khouri H.M."/>
            <person name="Gill J."/>
            <person name="Utterback T.R."/>
            <person name="Feldblyum T.V."/>
            <person name="Wall J.D."/>
            <person name="Voordouw G."/>
            <person name="Fraser C.M."/>
        </authorList>
    </citation>
    <scope>NUCLEOTIDE SEQUENCE [LARGE SCALE GENOMIC DNA]</scope>
    <source>
        <strain>ATCC 29579 / DSM 644 / CCUG 34227 / NCIMB 8303 / VKM B-1760 / Hildenborough</strain>
    </source>
</reference>
<proteinExistence type="inferred from homology"/>